<name>MEND_LISW6</name>
<sequence>MTNHEQVLTDYLAAFIEELVQAGVKEAIISPGSRSTPLALMMAEHPILKIYVDVDERSAGFFALGLAKASKRPVVLLSTSGTAAANYFPAIAEANLSQIPLIILTADRPHELRNVGAPQAMDQLHLYGSHVKDFTDMALPENSDEMLRYAKWHGSRAVDIAMKTPRGPVHLNFPLREPLVPILEPSPYTATGKKHHHVHIYYTHEVLDDSSIQKMVTDCTGKKGVFVVGPIDKKEIEQPMVDLAKKLGWPILADPLSGLRSYGAKDDVVIDQYDAFLKEAAIWDNLTPEVVIRFGSMPVSKPLKNWLEQLSDIRFYVVDPGAAWKDPIKAVTDMIHCDERFLLDIMQKNMPDDTKISAWLNRWTAYNQTAREIVLTEMENTTTLEEGKIVAELRRLLPDKAGLFIGNSMPIRDVDTYFSQIDKKIKMLANRGANGIDGVVSSALGASVVFQPMFLLIGDLSFYHDMNGLLMAKKYKMNLTIIIVNNDGGGIFSFLPQAKEPKYFESLFGTSTELDFRFAAAFYDGDYHEAKSVDELEEAVDKATYHKGLDIIEVKTNRHENKANHQALWDKIATGLKALD</sequence>
<accession>A0AJC9</accession>
<gene>
    <name evidence="1" type="primary">menD</name>
    <name type="ordered locus">lwe1693</name>
</gene>
<dbReference type="EC" id="2.2.1.9" evidence="1"/>
<dbReference type="EMBL" id="AM263198">
    <property type="protein sequence ID" value="CAK21111.1"/>
    <property type="molecule type" value="Genomic_DNA"/>
</dbReference>
<dbReference type="RefSeq" id="WP_011702475.1">
    <property type="nucleotide sequence ID" value="NC_008555.1"/>
</dbReference>
<dbReference type="SMR" id="A0AJC9"/>
<dbReference type="STRING" id="386043.lwe1693"/>
<dbReference type="GeneID" id="61189569"/>
<dbReference type="KEGG" id="lwe:lwe1693"/>
<dbReference type="eggNOG" id="COG1165">
    <property type="taxonomic scope" value="Bacteria"/>
</dbReference>
<dbReference type="HOGENOM" id="CLU_006051_3_0_9"/>
<dbReference type="OrthoDB" id="9791859at2"/>
<dbReference type="UniPathway" id="UPA00079"/>
<dbReference type="UniPathway" id="UPA01057">
    <property type="reaction ID" value="UER00164"/>
</dbReference>
<dbReference type="Proteomes" id="UP000000779">
    <property type="component" value="Chromosome"/>
</dbReference>
<dbReference type="GO" id="GO:0070204">
    <property type="term" value="F:2-succinyl-5-enolpyruvyl-6-hydroxy-3-cyclohexene-1-carboxylic-acid synthase activity"/>
    <property type="evidence" value="ECO:0007669"/>
    <property type="project" value="UniProtKB-UniRule"/>
</dbReference>
<dbReference type="GO" id="GO:0000287">
    <property type="term" value="F:magnesium ion binding"/>
    <property type="evidence" value="ECO:0007669"/>
    <property type="project" value="UniProtKB-UniRule"/>
</dbReference>
<dbReference type="GO" id="GO:0030145">
    <property type="term" value="F:manganese ion binding"/>
    <property type="evidence" value="ECO:0007669"/>
    <property type="project" value="UniProtKB-UniRule"/>
</dbReference>
<dbReference type="GO" id="GO:0030976">
    <property type="term" value="F:thiamine pyrophosphate binding"/>
    <property type="evidence" value="ECO:0007669"/>
    <property type="project" value="UniProtKB-UniRule"/>
</dbReference>
<dbReference type="GO" id="GO:0009234">
    <property type="term" value="P:menaquinone biosynthetic process"/>
    <property type="evidence" value="ECO:0007669"/>
    <property type="project" value="UniProtKB-UniRule"/>
</dbReference>
<dbReference type="CDD" id="cd07037">
    <property type="entry name" value="TPP_PYR_MenD"/>
    <property type="match status" value="1"/>
</dbReference>
<dbReference type="CDD" id="cd02009">
    <property type="entry name" value="TPP_SHCHC_synthase"/>
    <property type="match status" value="1"/>
</dbReference>
<dbReference type="Gene3D" id="3.40.50.970">
    <property type="match status" value="2"/>
</dbReference>
<dbReference type="Gene3D" id="3.40.50.1220">
    <property type="entry name" value="TPP-binding domain"/>
    <property type="match status" value="1"/>
</dbReference>
<dbReference type="HAMAP" id="MF_01659">
    <property type="entry name" value="MenD"/>
    <property type="match status" value="1"/>
</dbReference>
<dbReference type="InterPro" id="IPR029035">
    <property type="entry name" value="DHS-like_NAD/FAD-binding_dom"/>
</dbReference>
<dbReference type="InterPro" id="IPR004433">
    <property type="entry name" value="MenaQ_synth_MenD"/>
</dbReference>
<dbReference type="InterPro" id="IPR032264">
    <property type="entry name" value="MenD_middle"/>
</dbReference>
<dbReference type="InterPro" id="IPR029061">
    <property type="entry name" value="THDP-binding"/>
</dbReference>
<dbReference type="InterPro" id="IPR012001">
    <property type="entry name" value="Thiamin_PyroP_enz_TPP-bd_dom"/>
</dbReference>
<dbReference type="InterPro" id="IPR011766">
    <property type="entry name" value="TPP_enzyme_TPP-bd"/>
</dbReference>
<dbReference type="NCBIfam" id="TIGR00173">
    <property type="entry name" value="menD"/>
    <property type="match status" value="1"/>
</dbReference>
<dbReference type="PANTHER" id="PTHR42916">
    <property type="entry name" value="2-SUCCINYL-5-ENOLPYRUVYL-6-HYDROXY-3-CYCLOHEXENE-1-CARBOXYLATE SYNTHASE"/>
    <property type="match status" value="1"/>
</dbReference>
<dbReference type="PANTHER" id="PTHR42916:SF1">
    <property type="entry name" value="PROTEIN PHYLLO, CHLOROPLASTIC"/>
    <property type="match status" value="1"/>
</dbReference>
<dbReference type="Pfam" id="PF02775">
    <property type="entry name" value="TPP_enzyme_C"/>
    <property type="match status" value="1"/>
</dbReference>
<dbReference type="Pfam" id="PF16582">
    <property type="entry name" value="TPP_enzyme_M_2"/>
    <property type="match status" value="1"/>
</dbReference>
<dbReference type="Pfam" id="PF02776">
    <property type="entry name" value="TPP_enzyme_N"/>
    <property type="match status" value="1"/>
</dbReference>
<dbReference type="PIRSF" id="PIRSF004983">
    <property type="entry name" value="MenD"/>
    <property type="match status" value="1"/>
</dbReference>
<dbReference type="SUPFAM" id="SSF52467">
    <property type="entry name" value="DHS-like NAD/FAD-binding domain"/>
    <property type="match status" value="1"/>
</dbReference>
<dbReference type="SUPFAM" id="SSF52518">
    <property type="entry name" value="Thiamin diphosphate-binding fold (THDP-binding)"/>
    <property type="match status" value="2"/>
</dbReference>
<evidence type="ECO:0000255" key="1">
    <source>
        <dbReference type="HAMAP-Rule" id="MF_01659"/>
    </source>
</evidence>
<organism>
    <name type="scientific">Listeria welshimeri serovar 6b (strain ATCC 35897 / DSM 20650 / CCUG 15529 / CIP 8149 / NCTC 11857 / SLCC 5334 / V8)</name>
    <dbReference type="NCBI Taxonomy" id="386043"/>
    <lineage>
        <taxon>Bacteria</taxon>
        <taxon>Bacillati</taxon>
        <taxon>Bacillota</taxon>
        <taxon>Bacilli</taxon>
        <taxon>Bacillales</taxon>
        <taxon>Listeriaceae</taxon>
        <taxon>Listeria</taxon>
    </lineage>
</organism>
<feature type="chain" id="PRO_0000341770" description="2-succinyl-5-enolpyruvyl-6-hydroxy-3-cyclohexene-1-carboxylate synthase">
    <location>
        <begin position="1"/>
        <end position="580"/>
    </location>
</feature>
<keyword id="KW-0460">Magnesium</keyword>
<keyword id="KW-0464">Manganese</keyword>
<keyword id="KW-0474">Menaquinone biosynthesis</keyword>
<keyword id="KW-0479">Metal-binding</keyword>
<keyword id="KW-0786">Thiamine pyrophosphate</keyword>
<keyword id="KW-0808">Transferase</keyword>
<proteinExistence type="inferred from homology"/>
<comment type="function">
    <text evidence="1">Catalyzes the thiamine diphosphate-dependent decarboxylation of 2-oxoglutarate and the subsequent addition of the resulting succinic semialdehyde-thiamine pyrophosphate anion to isochorismate to yield 2-succinyl-5-enolpyruvyl-6-hydroxy-3-cyclohexene-1-carboxylate (SEPHCHC).</text>
</comment>
<comment type="catalytic activity">
    <reaction evidence="1">
        <text>isochorismate + 2-oxoglutarate + H(+) = 5-enolpyruvoyl-6-hydroxy-2-succinyl-cyclohex-3-ene-1-carboxylate + CO2</text>
        <dbReference type="Rhea" id="RHEA:25593"/>
        <dbReference type="ChEBI" id="CHEBI:15378"/>
        <dbReference type="ChEBI" id="CHEBI:16526"/>
        <dbReference type="ChEBI" id="CHEBI:16810"/>
        <dbReference type="ChEBI" id="CHEBI:29780"/>
        <dbReference type="ChEBI" id="CHEBI:58818"/>
        <dbReference type="EC" id="2.2.1.9"/>
    </reaction>
</comment>
<comment type="cofactor">
    <cofactor evidence="1">
        <name>Mg(2+)</name>
        <dbReference type="ChEBI" id="CHEBI:18420"/>
    </cofactor>
    <cofactor evidence="1">
        <name>Mn(2+)</name>
        <dbReference type="ChEBI" id="CHEBI:29035"/>
    </cofactor>
</comment>
<comment type="cofactor">
    <cofactor evidence="1">
        <name>thiamine diphosphate</name>
        <dbReference type="ChEBI" id="CHEBI:58937"/>
    </cofactor>
    <text evidence="1">Binds 1 thiamine pyrophosphate per subunit.</text>
</comment>
<comment type="pathway">
    <text evidence="1">Quinol/quinone metabolism; 1,4-dihydroxy-2-naphthoate biosynthesis; 1,4-dihydroxy-2-naphthoate from chorismate: step 2/7.</text>
</comment>
<comment type="pathway">
    <text evidence="1">Quinol/quinone metabolism; menaquinone biosynthesis.</text>
</comment>
<comment type="subunit">
    <text evidence="1">Homodimer.</text>
</comment>
<comment type="similarity">
    <text evidence="1">Belongs to the TPP enzyme family. MenD subfamily.</text>
</comment>
<protein>
    <recommendedName>
        <fullName evidence="1">2-succinyl-5-enolpyruvyl-6-hydroxy-3-cyclohexene-1-carboxylate synthase</fullName>
        <shortName evidence="1">SEPHCHC synthase</shortName>
        <ecNumber evidence="1">2.2.1.9</ecNumber>
    </recommendedName>
    <alternativeName>
        <fullName evidence="1">Menaquinone biosynthesis protein MenD</fullName>
    </alternativeName>
</protein>
<reference key="1">
    <citation type="journal article" date="2006" name="J. Bacteriol.">
        <title>Whole-genome sequence of Listeria welshimeri reveals common steps in genome reduction with Listeria innocua as compared to Listeria monocytogenes.</title>
        <authorList>
            <person name="Hain T."/>
            <person name="Steinweg C."/>
            <person name="Kuenne C.T."/>
            <person name="Billion A."/>
            <person name="Ghai R."/>
            <person name="Chatterjee S.S."/>
            <person name="Domann E."/>
            <person name="Kaerst U."/>
            <person name="Goesmann A."/>
            <person name="Bekel T."/>
            <person name="Bartels D."/>
            <person name="Kaiser O."/>
            <person name="Meyer F."/>
            <person name="Puehler A."/>
            <person name="Weisshaar B."/>
            <person name="Wehland J."/>
            <person name="Liang C."/>
            <person name="Dandekar T."/>
            <person name="Lampidis R."/>
            <person name="Kreft J."/>
            <person name="Goebel W."/>
            <person name="Chakraborty T."/>
        </authorList>
    </citation>
    <scope>NUCLEOTIDE SEQUENCE [LARGE SCALE GENOMIC DNA]</scope>
    <source>
        <strain>ATCC 35897 / DSM 20650 / CCUG 15529 / CIP 8149 / NCTC 11857 / SLCC 5334 / V8</strain>
    </source>
</reference>